<gene>
    <name evidence="1" type="primary">rpoH</name>
    <name type="ordered locus">BUsg_026</name>
</gene>
<evidence type="ECO:0000255" key="1">
    <source>
        <dbReference type="HAMAP-Rule" id="MF_00961"/>
    </source>
</evidence>
<keyword id="KW-0963">Cytoplasm</keyword>
<keyword id="KW-0238">DNA-binding</keyword>
<keyword id="KW-0731">Sigma factor</keyword>
<keyword id="KW-0346">Stress response</keyword>
<keyword id="KW-0804">Transcription</keyword>
<keyword id="KW-0805">Transcription regulation</keyword>
<sequence>MTNKVQILSVTALGNLDAYIRIANLWPMLSIKEEKLLTKRLRYHDDLDAAKTLILSHLRFVIHISRNYSGYGLLQADLIQEGNIGLMKAVRRFNPDIGVRLVSFAVHWIKSEIHEYVLRNWRIVKVATTKSQRKLFFNLRKNKKRLGWFNQEEIEIVARELGVSSEDVREMESRMSAQDITFNPFPEEDLKDGKINGNMFYLQDKTSNFANGLEQDNWNKHTTSKLSNALLRLDERSRNIIRARWLDKKEKNTLQKIANNYGISAERVRQLEKNAMKKLKIAIEN</sequence>
<accession>Q8KA76</accession>
<protein>
    <recommendedName>
        <fullName evidence="1">RNA polymerase sigma factor RpoH</fullName>
    </recommendedName>
    <alternativeName>
        <fullName evidence="1">RNA polymerase sigma-32 factor</fullName>
    </alternativeName>
</protein>
<feature type="chain" id="PRO_0000093952" description="RNA polymerase sigma factor RpoH">
    <location>
        <begin position="1"/>
        <end position="285"/>
    </location>
</feature>
<feature type="DNA-binding region" description="H-T-H motif" evidence="1">
    <location>
        <begin position="254"/>
        <end position="273"/>
    </location>
</feature>
<feature type="region of interest" description="Sigma-70 factor domain-2" evidence="1">
    <location>
        <begin position="53"/>
        <end position="122"/>
    </location>
</feature>
<feature type="region of interest" description="Sigma-70 factor domain-4" evidence="1">
    <location>
        <begin position="229"/>
        <end position="281"/>
    </location>
</feature>
<feature type="short sequence motif" description="Interaction with polymerase core subunit RpoC">
    <location>
        <begin position="77"/>
        <end position="80"/>
    </location>
</feature>
<dbReference type="EMBL" id="AE013218">
    <property type="protein sequence ID" value="AAM67597.1"/>
    <property type="molecule type" value="Genomic_DNA"/>
</dbReference>
<dbReference type="RefSeq" id="WP_011053563.1">
    <property type="nucleotide sequence ID" value="NC_004061.1"/>
</dbReference>
<dbReference type="SMR" id="Q8KA76"/>
<dbReference type="STRING" id="198804.BUsg_026"/>
<dbReference type="GeneID" id="93003489"/>
<dbReference type="KEGG" id="bas:BUsg_026"/>
<dbReference type="eggNOG" id="COG0568">
    <property type="taxonomic scope" value="Bacteria"/>
</dbReference>
<dbReference type="HOGENOM" id="CLU_014793_3_5_6"/>
<dbReference type="Proteomes" id="UP000000416">
    <property type="component" value="Chromosome"/>
</dbReference>
<dbReference type="GO" id="GO:0005737">
    <property type="term" value="C:cytoplasm"/>
    <property type="evidence" value="ECO:0007669"/>
    <property type="project" value="UniProtKB-SubCell"/>
</dbReference>
<dbReference type="GO" id="GO:0003677">
    <property type="term" value="F:DNA binding"/>
    <property type="evidence" value="ECO:0007669"/>
    <property type="project" value="UniProtKB-UniRule"/>
</dbReference>
<dbReference type="GO" id="GO:0016987">
    <property type="term" value="F:sigma factor activity"/>
    <property type="evidence" value="ECO:0007669"/>
    <property type="project" value="UniProtKB-UniRule"/>
</dbReference>
<dbReference type="GO" id="GO:0006352">
    <property type="term" value="P:DNA-templated transcription initiation"/>
    <property type="evidence" value="ECO:0007669"/>
    <property type="project" value="UniProtKB-UniRule"/>
</dbReference>
<dbReference type="GO" id="GO:0009408">
    <property type="term" value="P:response to heat"/>
    <property type="evidence" value="ECO:0007669"/>
    <property type="project" value="UniProtKB-UniRule"/>
</dbReference>
<dbReference type="CDD" id="cd06171">
    <property type="entry name" value="Sigma70_r4"/>
    <property type="match status" value="1"/>
</dbReference>
<dbReference type="FunFam" id="1.10.10.10:FF:000285">
    <property type="entry name" value="RNA polymerase sigma factor RpoH"/>
    <property type="match status" value="1"/>
</dbReference>
<dbReference type="FunFam" id="1.20.120.1810:FF:000001">
    <property type="entry name" value="RNA polymerase sigma factor RpoH"/>
    <property type="match status" value="1"/>
</dbReference>
<dbReference type="Gene3D" id="1.20.120.1810">
    <property type="match status" value="1"/>
</dbReference>
<dbReference type="Gene3D" id="1.20.140.160">
    <property type="match status" value="1"/>
</dbReference>
<dbReference type="HAMAP" id="MF_00961">
    <property type="entry name" value="Sigma70_RpoH"/>
    <property type="match status" value="1"/>
</dbReference>
<dbReference type="InterPro" id="IPR014284">
    <property type="entry name" value="RNA_pol_sigma-70_dom"/>
</dbReference>
<dbReference type="InterPro" id="IPR000943">
    <property type="entry name" value="RNA_pol_sigma70"/>
</dbReference>
<dbReference type="InterPro" id="IPR007627">
    <property type="entry name" value="RNA_pol_sigma70_r2"/>
</dbReference>
<dbReference type="InterPro" id="IPR007630">
    <property type="entry name" value="RNA_pol_sigma70_r4"/>
</dbReference>
<dbReference type="InterPro" id="IPR013325">
    <property type="entry name" value="RNA_pol_sigma_r2"/>
</dbReference>
<dbReference type="InterPro" id="IPR013324">
    <property type="entry name" value="RNA_pol_sigma_r3/r4-like"/>
</dbReference>
<dbReference type="InterPro" id="IPR012759">
    <property type="entry name" value="RNA_pol_sigma_RpoH_proteobac"/>
</dbReference>
<dbReference type="InterPro" id="IPR050813">
    <property type="entry name" value="Sigma-70_Factor"/>
</dbReference>
<dbReference type="NCBIfam" id="NF005143">
    <property type="entry name" value="PRK06596.1"/>
    <property type="match status" value="1"/>
</dbReference>
<dbReference type="NCBIfam" id="TIGR02392">
    <property type="entry name" value="rpoH_proteo"/>
    <property type="match status" value="1"/>
</dbReference>
<dbReference type="NCBIfam" id="TIGR02937">
    <property type="entry name" value="sigma70-ECF"/>
    <property type="match status" value="1"/>
</dbReference>
<dbReference type="PANTHER" id="PTHR30376:SF3">
    <property type="entry name" value="RNA POLYMERASE SIGMA FACTOR RPOH"/>
    <property type="match status" value="1"/>
</dbReference>
<dbReference type="PANTHER" id="PTHR30376">
    <property type="entry name" value="SIGMA FACTOR RPOH HEAT SHOCK RELATED"/>
    <property type="match status" value="1"/>
</dbReference>
<dbReference type="Pfam" id="PF04542">
    <property type="entry name" value="Sigma70_r2"/>
    <property type="match status" value="1"/>
</dbReference>
<dbReference type="Pfam" id="PF04545">
    <property type="entry name" value="Sigma70_r4"/>
    <property type="match status" value="1"/>
</dbReference>
<dbReference type="PRINTS" id="PR00046">
    <property type="entry name" value="SIGMA70FCT"/>
</dbReference>
<dbReference type="SUPFAM" id="SSF88946">
    <property type="entry name" value="Sigma2 domain of RNA polymerase sigma factors"/>
    <property type="match status" value="1"/>
</dbReference>
<dbReference type="SUPFAM" id="SSF88659">
    <property type="entry name" value="Sigma3 and sigma4 domains of RNA polymerase sigma factors"/>
    <property type="match status" value="1"/>
</dbReference>
<dbReference type="PROSITE" id="PS00715">
    <property type="entry name" value="SIGMA70_1"/>
    <property type="match status" value="1"/>
</dbReference>
<comment type="function">
    <text evidence="1">Sigma factors are initiation factors that promote the attachment of RNA polymerase to specific initiation sites and are then released. This sigma factor is involved in regulation of expression of heat shock genes.</text>
</comment>
<comment type="subunit">
    <text evidence="1">Interacts with the RNA polymerase core enzyme.</text>
</comment>
<comment type="subcellular location">
    <subcellularLocation>
        <location evidence="1">Cytoplasm</location>
    </subcellularLocation>
</comment>
<comment type="similarity">
    <text evidence="1">Belongs to the sigma-70 factor family. RpoH subfamily.</text>
</comment>
<proteinExistence type="inferred from homology"/>
<organism>
    <name type="scientific">Buchnera aphidicola subsp. Schizaphis graminum (strain Sg)</name>
    <dbReference type="NCBI Taxonomy" id="198804"/>
    <lineage>
        <taxon>Bacteria</taxon>
        <taxon>Pseudomonadati</taxon>
        <taxon>Pseudomonadota</taxon>
        <taxon>Gammaproteobacteria</taxon>
        <taxon>Enterobacterales</taxon>
        <taxon>Erwiniaceae</taxon>
        <taxon>Buchnera</taxon>
    </lineage>
</organism>
<name>RPOH_BUCAP</name>
<reference key="1">
    <citation type="journal article" date="2002" name="Science">
        <title>50 million years of genomic stasis in endosymbiotic bacteria.</title>
        <authorList>
            <person name="Tamas I."/>
            <person name="Klasson L."/>
            <person name="Canbaeck B."/>
            <person name="Naeslund A.K."/>
            <person name="Eriksson A.-S."/>
            <person name="Wernegreen J.J."/>
            <person name="Sandstroem J.P."/>
            <person name="Moran N.A."/>
            <person name="Andersson S.G.E."/>
        </authorList>
    </citation>
    <scope>NUCLEOTIDE SEQUENCE [LARGE SCALE GENOMIC DNA]</scope>
    <source>
        <strain>Sg</strain>
    </source>
</reference>